<gene>
    <name evidence="2" type="primary">C</name>
</gene>
<organismHost>
    <name type="scientific">Homo sapiens</name>
    <name type="common">Human</name>
    <dbReference type="NCBI Taxonomy" id="9606"/>
</organismHost>
<organismHost>
    <name type="scientific">Pan troglodytes</name>
    <name type="common">Chimpanzee</name>
    <dbReference type="NCBI Taxonomy" id="9598"/>
</organismHost>
<name>HBEAG_HBVA2</name>
<sequence length="214" mass="24642">MQLFHLCLIISCTCPTVQASKLCLGWLWGMDIDPYKEFGATVELLSFLPSDFFPSVRDLLDTASALYREALESPEHCSPHHTALRQAILCWGELMTLATWVGNNLQDPASRDLVVNYVNTNMGLKIRQLLWFHISCLTFGRETVLEYLVSFGVWIRTPPAYRPPNAPILSTLPETTVVRRRDRGRSPRRRTPSPRRRRSQSPRRRRSQSRESQC</sequence>
<evidence type="ECO:0000250" key="1"/>
<evidence type="ECO:0000255" key="2">
    <source>
        <dbReference type="HAMAP-Rule" id="MF_04076"/>
    </source>
</evidence>
<evidence type="ECO:0000256" key="3">
    <source>
        <dbReference type="SAM" id="MobiDB-lite"/>
    </source>
</evidence>
<keyword id="KW-0024">Alternative initiation</keyword>
<keyword id="KW-1015">Disulfide bond</keyword>
<keyword id="KW-1048">Host nucleus</keyword>
<keyword id="KW-0945">Host-virus interaction</keyword>
<keyword id="KW-0677">Repeat</keyword>
<keyword id="KW-0964">Secreted</keyword>
<keyword id="KW-0732">Signal</keyword>
<keyword id="KW-0899">Viral immunoevasion</keyword>
<accession>P0C692</accession>
<dbReference type="EMBL" id="V00866">
    <property type="status" value="NOT_ANNOTATED_CDS"/>
    <property type="molecule type" value="Genomic_DNA"/>
</dbReference>
<dbReference type="SMR" id="P0C692"/>
<dbReference type="Proteomes" id="UP000007906">
    <property type="component" value="Genome"/>
</dbReference>
<dbReference type="GO" id="GO:0005576">
    <property type="term" value="C:extracellular region"/>
    <property type="evidence" value="ECO:0007669"/>
    <property type="project" value="UniProtKB-SubCell"/>
</dbReference>
<dbReference type="GO" id="GO:0043657">
    <property type="term" value="C:host cell"/>
    <property type="evidence" value="ECO:0007669"/>
    <property type="project" value="GOC"/>
</dbReference>
<dbReference type="GO" id="GO:0030430">
    <property type="term" value="C:host cell cytoplasm"/>
    <property type="evidence" value="ECO:0007669"/>
    <property type="project" value="UniProtKB-UniRule"/>
</dbReference>
<dbReference type="GO" id="GO:0042025">
    <property type="term" value="C:host cell nucleus"/>
    <property type="evidence" value="ECO:0007669"/>
    <property type="project" value="UniProtKB-SubCell"/>
</dbReference>
<dbReference type="GO" id="GO:0039619">
    <property type="term" value="C:T=4 icosahedral viral capsid"/>
    <property type="evidence" value="ECO:0007669"/>
    <property type="project" value="UniProtKB-UniRule"/>
</dbReference>
<dbReference type="GO" id="GO:0003677">
    <property type="term" value="F:DNA binding"/>
    <property type="evidence" value="ECO:0007669"/>
    <property type="project" value="UniProtKB-UniRule"/>
</dbReference>
<dbReference type="GO" id="GO:0003723">
    <property type="term" value="F:RNA binding"/>
    <property type="evidence" value="ECO:0007669"/>
    <property type="project" value="UniProtKB-UniRule"/>
</dbReference>
<dbReference type="GO" id="GO:0005198">
    <property type="term" value="F:structural molecule activity"/>
    <property type="evidence" value="ECO:0007669"/>
    <property type="project" value="UniProtKB-UniRule"/>
</dbReference>
<dbReference type="GO" id="GO:0075521">
    <property type="term" value="P:microtubule-dependent intracellular transport of viral material towards nucleus"/>
    <property type="evidence" value="ECO:0007669"/>
    <property type="project" value="UniProtKB-UniRule"/>
</dbReference>
<dbReference type="GO" id="GO:0046718">
    <property type="term" value="P:symbiont entry into host cell"/>
    <property type="evidence" value="ECO:0007669"/>
    <property type="project" value="UniProtKB-UniRule"/>
</dbReference>
<dbReference type="GO" id="GO:0075732">
    <property type="term" value="P:viral penetration into host nucleus"/>
    <property type="evidence" value="ECO:0007669"/>
    <property type="project" value="UniProtKB-UniRule"/>
</dbReference>
<dbReference type="FunFam" id="1.10.4090.10:FF:000001">
    <property type="entry name" value="Capsid protein"/>
    <property type="match status" value="1"/>
</dbReference>
<dbReference type="Gene3D" id="1.10.4090.10">
    <property type="entry name" value="Viral capsid, core domain supefamily, Hepatitis B virus"/>
    <property type="match status" value="1"/>
</dbReference>
<dbReference type="HAMAP" id="MF_04076">
    <property type="entry name" value="HBV_HBEAG"/>
    <property type="match status" value="1"/>
</dbReference>
<dbReference type="InterPro" id="IPR013195">
    <property type="entry name" value="Hepatitis_B_virus_capsid_N"/>
</dbReference>
<dbReference type="InterPro" id="IPR002006">
    <property type="entry name" value="Hepatitis_core"/>
</dbReference>
<dbReference type="InterPro" id="IPR036459">
    <property type="entry name" value="Viral_capsid_core_dom_sf_HBV"/>
</dbReference>
<dbReference type="Pfam" id="PF08290">
    <property type="entry name" value="Hep_core_N"/>
    <property type="match status" value="1"/>
</dbReference>
<dbReference type="Pfam" id="PF00906">
    <property type="entry name" value="Hepatitis_core"/>
    <property type="match status" value="2"/>
</dbReference>
<dbReference type="SUPFAM" id="SSF47852">
    <property type="entry name" value="Hepatitis B viral capsid (hbcag)"/>
    <property type="match status" value="1"/>
</dbReference>
<feature type="signal peptide" evidence="2">
    <location>
        <begin position="1"/>
        <end position="19"/>
    </location>
</feature>
<feature type="chain" id="PRO_0000324690" description="External core antigen" evidence="2">
    <location>
        <begin position="20"/>
        <end position="214"/>
    </location>
</feature>
<feature type="propeptide" id="PRO_0000324691" evidence="1">
    <location>
        <begin position="186"/>
        <end position="214"/>
    </location>
</feature>
<feature type="repeat" description="1; half-length">
    <location>
        <begin position="186"/>
        <end position="192"/>
    </location>
</feature>
<feature type="repeat" description="2">
    <location>
        <begin position="193"/>
        <end position="200"/>
    </location>
</feature>
<feature type="repeat" description="3">
    <location>
        <begin position="201"/>
        <end position="208"/>
    </location>
</feature>
<feature type="region of interest" description="HBEAG" evidence="2">
    <location>
        <begin position="25"/>
        <end position="27"/>
    </location>
</feature>
<feature type="region of interest" description="Disordered" evidence="3">
    <location>
        <begin position="165"/>
        <end position="214"/>
    </location>
</feature>
<feature type="region of interest" description="3 X 8 AA repeats of S-P-R-R-R-R-S-Q">
    <location>
        <begin position="186"/>
        <end position="208"/>
    </location>
</feature>
<feature type="compositionally biased region" description="Basic residues" evidence="3">
    <location>
        <begin position="178"/>
        <end position="207"/>
    </location>
</feature>
<feature type="site" description="Cleavage; by host" evidence="2">
    <location>
        <begin position="185"/>
        <end position="186"/>
    </location>
</feature>
<feature type="disulfide bond" description="Interchain" evidence="2">
    <location>
        <position position="77"/>
    </location>
</feature>
<feature type="disulfide bond" description="Interchain" evidence="2">
    <location>
        <position position="90"/>
    </location>
</feature>
<reference key="1">
    <citation type="journal article" date="1983" name="Nucleic Acids Res.">
        <title>The complete nucleotide sequences of the cloned hepatitis B virus DNA; subtype adr and adw.</title>
        <authorList>
            <person name="Ono Y."/>
            <person name="Onda H."/>
            <person name="Sasada R."/>
            <person name="Igarashi K."/>
            <person name="Sugino Y."/>
            <person name="Nishioka K."/>
        </authorList>
    </citation>
    <scope>NUCLEOTIDE SEQUENCE [GENOMIC DNA]</scope>
</reference>
<proteinExistence type="inferred from homology"/>
<organism>
    <name type="scientific">Hepatitis B virus genotype A2 subtype adw (isolate Japan/Nishioka/1983)</name>
    <name type="common">HBV-A</name>
    <dbReference type="NCBI Taxonomy" id="482134"/>
    <lineage>
        <taxon>Viruses</taxon>
        <taxon>Riboviria</taxon>
        <taxon>Pararnavirae</taxon>
        <taxon>Artverviricota</taxon>
        <taxon>Revtraviricetes</taxon>
        <taxon>Blubervirales</taxon>
        <taxon>Hepadnaviridae</taxon>
        <taxon>Orthohepadnavirus</taxon>
        <taxon>Hepatitis B virus</taxon>
    </lineage>
</organism>
<comment type="function">
    <text evidence="2">May regulate immune response to the intracellular capsid in acting as a T-cell tolerogen, by having an immunoregulatory effect which prevents destruction of infected cells by cytotoxic T-cells. This immune regulation may predispose to chronicity during perinatal infections and prevent severe liver injury during adult infections.</text>
</comment>
<comment type="subunit">
    <text evidence="2">Homodimerizes.</text>
</comment>
<comment type="subcellular location">
    <subcellularLocation>
        <location evidence="2">Secreted</location>
    </subcellularLocation>
    <subcellularLocation>
        <location evidence="2">Host nucleus</location>
    </subcellularLocation>
</comment>
<comment type="alternative products">
    <event type="alternative initiation"/>
    <isoform>
        <id>P0C692-1</id>
        <name>External core antigen</name>
        <sequence type="displayed"/>
    </isoform>
    <isoform>
        <id>P03149-1</id>
        <name>Capsid protein</name>
        <sequence type="external"/>
    </isoform>
</comment>
<comment type="PTM">
    <text evidence="2">Phosphorylated.</text>
</comment>
<comment type="PTM">
    <text evidence="2">Cleaved by host furin.</text>
</comment>
<comment type="similarity">
    <text evidence="2">Belongs to the orthohepadnavirus precore antigen family.</text>
</comment>
<protein>
    <recommendedName>
        <fullName evidence="2">External core antigen</fullName>
    </recommendedName>
    <alternativeName>
        <fullName evidence="2">HBeAg</fullName>
    </alternativeName>
    <alternativeName>
        <fullName evidence="2">Precore protein</fullName>
    </alternativeName>
    <alternativeName>
        <fullName evidence="2">p25</fullName>
    </alternativeName>
</protein>